<evidence type="ECO:0000255" key="1">
    <source>
        <dbReference type="HAMAP-Rule" id="MF_00513"/>
    </source>
</evidence>
<evidence type="ECO:0000305" key="2"/>
<sequence length="297" mass="33509">MKRPDYRTLQALDAVIRERGFERAAQKLCITQSAVSQRIKQLENMFGQPLLVRTVPPRPTEQGQKLLALLRQVELLEEEWLGDEQTGSTPLLLSLAVNADSLATWLLPALAPVLADSPIRLNLQVEDETRTQERLRRGEVVGAVSIQHQALPSCLVDKLGALDYLFVASKPFAERYFPNGVTRSSLLKAPAVAFDHLDDMHQAFLQQNFDLPPGSVPCHIVNSSEAFVQLARQGTTCCMIPHLQIEKELESGELINLTPGLLQRRMLYWHRFAPESRMMRKVTDALLEYGHKVLRQD</sequence>
<feature type="chain" id="PRO_0000105647" description="HTH-type transcriptional regulator ArgP">
    <location>
        <begin position="1"/>
        <end position="297"/>
    </location>
</feature>
<feature type="domain" description="HTH lysR-type" evidence="1">
    <location>
        <begin position="4"/>
        <end position="60"/>
    </location>
</feature>
<feature type="DNA-binding region" description="H-T-H motif" evidence="1">
    <location>
        <begin position="21"/>
        <end position="40"/>
    </location>
</feature>
<protein>
    <recommendedName>
        <fullName evidence="1">HTH-type transcriptional regulator ArgP</fullName>
    </recommendedName>
</protein>
<name>ARGP_SALTY</name>
<organism>
    <name type="scientific">Salmonella typhimurium (strain LT2 / SGSC1412 / ATCC 700720)</name>
    <dbReference type="NCBI Taxonomy" id="99287"/>
    <lineage>
        <taxon>Bacteria</taxon>
        <taxon>Pseudomonadati</taxon>
        <taxon>Pseudomonadota</taxon>
        <taxon>Gammaproteobacteria</taxon>
        <taxon>Enterobacterales</taxon>
        <taxon>Enterobacteriaceae</taxon>
        <taxon>Salmonella</taxon>
    </lineage>
</organism>
<keyword id="KW-0238">DNA-binding</keyword>
<keyword id="KW-1185">Reference proteome</keyword>
<keyword id="KW-0804">Transcription</keyword>
<keyword id="KW-0805">Transcription regulation</keyword>
<accession>P58509</accession>
<proteinExistence type="inferred from homology"/>
<reference key="1">
    <citation type="journal article" date="2001" name="Nature">
        <title>Complete genome sequence of Salmonella enterica serovar Typhimurium LT2.</title>
        <authorList>
            <person name="McClelland M."/>
            <person name="Sanderson K.E."/>
            <person name="Spieth J."/>
            <person name="Clifton S.W."/>
            <person name="Latreille P."/>
            <person name="Courtney L."/>
            <person name="Porwollik S."/>
            <person name="Ali J."/>
            <person name="Dante M."/>
            <person name="Du F."/>
            <person name="Hou S."/>
            <person name="Layman D."/>
            <person name="Leonard S."/>
            <person name="Nguyen C."/>
            <person name="Scott K."/>
            <person name="Holmes A."/>
            <person name="Grewal N."/>
            <person name="Mulvaney E."/>
            <person name="Ryan E."/>
            <person name="Sun H."/>
            <person name="Florea L."/>
            <person name="Miller W."/>
            <person name="Stoneking T."/>
            <person name="Nhan M."/>
            <person name="Waterston R."/>
            <person name="Wilson R.K."/>
        </authorList>
    </citation>
    <scope>NUCLEOTIDE SEQUENCE [LARGE SCALE GENOMIC DNA]</scope>
    <source>
        <strain>LT2 / SGSC1412 / ATCC 700720</strain>
    </source>
</reference>
<dbReference type="EMBL" id="AE006468">
    <property type="protein sequence ID" value="AAL21939.1"/>
    <property type="molecule type" value="Genomic_DNA"/>
</dbReference>
<dbReference type="RefSeq" id="NP_461980.1">
    <property type="nucleotide sequence ID" value="NC_003197.2"/>
</dbReference>
<dbReference type="RefSeq" id="WP_000828345.1">
    <property type="nucleotide sequence ID" value="NC_003197.2"/>
</dbReference>
<dbReference type="SMR" id="P58509"/>
<dbReference type="STRING" id="99287.STM3064"/>
<dbReference type="PaxDb" id="99287-STM3064"/>
<dbReference type="GeneID" id="1254587"/>
<dbReference type="GeneID" id="66757362"/>
<dbReference type="KEGG" id="stm:STM3064"/>
<dbReference type="PATRIC" id="fig|99287.12.peg.3246"/>
<dbReference type="HOGENOM" id="CLU_063829_0_0_6"/>
<dbReference type="OMA" id="QGSTCCM"/>
<dbReference type="PhylomeDB" id="P58509"/>
<dbReference type="BioCyc" id="SENT99287:STM3064-MONOMER"/>
<dbReference type="Proteomes" id="UP000001014">
    <property type="component" value="Chromosome"/>
</dbReference>
<dbReference type="GO" id="GO:0003677">
    <property type="term" value="F:DNA binding"/>
    <property type="evidence" value="ECO:0007669"/>
    <property type="project" value="UniProtKB-UniRule"/>
</dbReference>
<dbReference type="GO" id="GO:0003700">
    <property type="term" value="F:DNA-binding transcription factor activity"/>
    <property type="evidence" value="ECO:0000318"/>
    <property type="project" value="GO_Central"/>
</dbReference>
<dbReference type="GO" id="GO:0006355">
    <property type="term" value="P:regulation of DNA-templated transcription"/>
    <property type="evidence" value="ECO:0000318"/>
    <property type="project" value="GO_Central"/>
</dbReference>
<dbReference type="CDD" id="cd08428">
    <property type="entry name" value="PBP2_IciA_ArgP"/>
    <property type="match status" value="1"/>
</dbReference>
<dbReference type="FunFam" id="1.10.10.10:FF:000061">
    <property type="entry name" value="HTH-type transcriptional regulator ArgP"/>
    <property type="match status" value="1"/>
</dbReference>
<dbReference type="FunFam" id="3.40.190.290:FF:000002">
    <property type="entry name" value="HTH-type transcriptional regulator ArgP"/>
    <property type="match status" value="1"/>
</dbReference>
<dbReference type="Gene3D" id="3.40.190.290">
    <property type="match status" value="1"/>
</dbReference>
<dbReference type="Gene3D" id="1.10.10.10">
    <property type="entry name" value="Winged helix-like DNA-binding domain superfamily/Winged helix DNA-binding domain"/>
    <property type="match status" value="1"/>
</dbReference>
<dbReference type="HAMAP" id="MF_00513">
    <property type="entry name" value="HTH_type_ArgP"/>
    <property type="match status" value="1"/>
</dbReference>
<dbReference type="InterPro" id="IPR017685">
    <property type="entry name" value="ArgP"/>
</dbReference>
<dbReference type="InterPro" id="IPR023490">
    <property type="entry name" value="ArgP_gammaproteobact"/>
</dbReference>
<dbReference type="InterPro" id="IPR050176">
    <property type="entry name" value="LTTR"/>
</dbReference>
<dbReference type="InterPro" id="IPR005119">
    <property type="entry name" value="LysR_subst-bd"/>
</dbReference>
<dbReference type="InterPro" id="IPR000847">
    <property type="entry name" value="Tscrpt_reg_HTH_LysR"/>
</dbReference>
<dbReference type="InterPro" id="IPR036388">
    <property type="entry name" value="WH-like_DNA-bd_sf"/>
</dbReference>
<dbReference type="InterPro" id="IPR036390">
    <property type="entry name" value="WH_DNA-bd_sf"/>
</dbReference>
<dbReference type="NCBIfam" id="TIGR03298">
    <property type="entry name" value="argP"/>
    <property type="match status" value="1"/>
</dbReference>
<dbReference type="NCBIfam" id="NF002964">
    <property type="entry name" value="PRK03635.1"/>
    <property type="match status" value="1"/>
</dbReference>
<dbReference type="NCBIfam" id="NF009888">
    <property type="entry name" value="PRK13348.1"/>
    <property type="match status" value="1"/>
</dbReference>
<dbReference type="PANTHER" id="PTHR30579:SF2">
    <property type="entry name" value="HTH-TYPE TRANSCRIPTIONAL REGULATOR ARGP"/>
    <property type="match status" value="1"/>
</dbReference>
<dbReference type="PANTHER" id="PTHR30579">
    <property type="entry name" value="TRANSCRIPTIONAL REGULATOR"/>
    <property type="match status" value="1"/>
</dbReference>
<dbReference type="Pfam" id="PF00126">
    <property type="entry name" value="HTH_1"/>
    <property type="match status" value="1"/>
</dbReference>
<dbReference type="Pfam" id="PF03466">
    <property type="entry name" value="LysR_substrate"/>
    <property type="match status" value="1"/>
</dbReference>
<dbReference type="PRINTS" id="PR00039">
    <property type="entry name" value="HTHLYSR"/>
</dbReference>
<dbReference type="SUPFAM" id="SSF53850">
    <property type="entry name" value="Periplasmic binding protein-like II"/>
    <property type="match status" value="1"/>
</dbReference>
<dbReference type="SUPFAM" id="SSF46785">
    <property type="entry name" value="Winged helix' DNA-binding domain"/>
    <property type="match status" value="1"/>
</dbReference>
<dbReference type="PROSITE" id="PS50931">
    <property type="entry name" value="HTH_LYSR"/>
    <property type="match status" value="1"/>
</dbReference>
<gene>
    <name evidence="1" type="primary">argP</name>
    <name type="synonym">iciA</name>
    <name type="ordered locus">STM3064</name>
</gene>
<comment type="function">
    <text evidence="1">Controls the transcription of genes involved in arginine and lysine metabolism.</text>
</comment>
<comment type="subunit">
    <text evidence="1">Homodimer.</text>
</comment>
<comment type="similarity">
    <text evidence="2">Belongs to the LysR transcriptional regulatory family.</text>
</comment>